<organism>
    <name type="scientific">Danio rerio</name>
    <name type="common">Zebrafish</name>
    <name type="synonym">Brachydanio rerio</name>
    <dbReference type="NCBI Taxonomy" id="7955"/>
    <lineage>
        <taxon>Eukaryota</taxon>
        <taxon>Metazoa</taxon>
        <taxon>Chordata</taxon>
        <taxon>Craniata</taxon>
        <taxon>Vertebrata</taxon>
        <taxon>Euteleostomi</taxon>
        <taxon>Actinopterygii</taxon>
        <taxon>Neopterygii</taxon>
        <taxon>Teleostei</taxon>
        <taxon>Ostariophysi</taxon>
        <taxon>Cypriniformes</taxon>
        <taxon>Danionidae</taxon>
        <taxon>Danioninae</taxon>
        <taxon>Danio</taxon>
    </lineage>
</organism>
<sequence length="199" mass="22739">MRAVCVFVLACVAVSGAPGVRGQDGPAEEELFQRAEDLLLRSILTQMEEQNSENDQPEWMEKRQHPGKRQHPGKREEDLEPEVEMERWRRQHPGKRAPLDLGMLEDPTALSELSKRQHPGKRYLMLLHKRQHPGRRELQEADGDSAELEKRQHPGKRRCEGWADAGCGLLELLDTSGAPEKRQHPGRRAELEDELPGLE</sequence>
<feature type="signal peptide" evidence="2">
    <location>
        <begin position="1"/>
        <end position="22"/>
    </location>
</feature>
<feature type="chain" id="PRO_0000041896" description="Pro-thyrotropin-releasing hormone">
    <location>
        <begin position="23"/>
        <end position="199"/>
    </location>
</feature>
<feature type="peptide" id="PRO_0000041897" description="Thyrotropin-releasing hormone">
    <location>
        <begin position="64"/>
        <end position="66"/>
    </location>
</feature>
<feature type="peptide" id="PRO_0000041898" description="Thyrotropin-releasing hormone">
    <location>
        <begin position="70"/>
        <end position="72"/>
    </location>
</feature>
<feature type="peptide" id="PRO_0000041899" description="Thyrotropin-releasing hormone">
    <location>
        <begin position="91"/>
        <end position="93"/>
    </location>
</feature>
<feature type="peptide" id="PRO_0000041900" description="Thyrotropin-releasing hormone">
    <location>
        <begin position="117"/>
        <end position="119"/>
    </location>
</feature>
<feature type="peptide" id="PRO_0000041901" description="Thyrotropin-releasing hormone">
    <location>
        <begin position="131"/>
        <end position="133"/>
    </location>
</feature>
<feature type="peptide" id="PRO_0000041902" description="Thyrotropin-releasing hormone">
    <location>
        <begin position="152"/>
        <end position="154"/>
    </location>
</feature>
<feature type="peptide" id="PRO_0000041903" description="Thyrotropin-releasing hormone">
    <location>
        <begin position="183"/>
        <end position="185"/>
    </location>
</feature>
<feature type="region of interest" description="Disordered" evidence="3">
    <location>
        <begin position="48"/>
        <end position="90"/>
    </location>
</feature>
<feature type="region of interest" description="Disordered" evidence="3">
    <location>
        <begin position="129"/>
        <end position="160"/>
    </location>
</feature>
<feature type="region of interest" description="Disordered" evidence="3">
    <location>
        <begin position="175"/>
        <end position="199"/>
    </location>
</feature>
<feature type="compositionally biased region" description="Basic and acidic residues" evidence="3">
    <location>
        <begin position="147"/>
        <end position="160"/>
    </location>
</feature>
<feature type="compositionally biased region" description="Basic and acidic residues" evidence="3">
    <location>
        <begin position="179"/>
        <end position="190"/>
    </location>
</feature>
<feature type="modified residue" description="Pyrrolidone carboxylic acid" evidence="1">
    <location>
        <position position="64"/>
    </location>
</feature>
<feature type="modified residue" description="Proline amide" evidence="1">
    <location>
        <position position="66"/>
    </location>
</feature>
<feature type="modified residue" description="Pyrrolidone carboxylic acid" evidence="1">
    <location>
        <position position="70"/>
    </location>
</feature>
<feature type="modified residue" description="Proline amide" evidence="1">
    <location>
        <position position="72"/>
    </location>
</feature>
<feature type="modified residue" description="Pyrrolidone carboxylic acid" evidence="1">
    <location>
        <position position="91"/>
    </location>
</feature>
<feature type="modified residue" description="Proline amide" evidence="1">
    <location>
        <position position="93"/>
    </location>
</feature>
<feature type="modified residue" description="Pyrrolidone carboxylic acid" evidence="1">
    <location>
        <position position="117"/>
    </location>
</feature>
<feature type="modified residue" description="Proline amide" evidence="1">
    <location>
        <position position="119"/>
    </location>
</feature>
<feature type="modified residue" description="Pyrrolidone carboxylic acid" evidence="1">
    <location>
        <position position="131"/>
    </location>
</feature>
<feature type="modified residue" description="Proline amide" evidence="1">
    <location>
        <position position="133"/>
    </location>
</feature>
<feature type="modified residue" description="Pyrrolidone carboxylic acid" evidence="1">
    <location>
        <position position="152"/>
    </location>
</feature>
<feature type="modified residue" description="Proline amide" evidence="1">
    <location>
        <position position="154"/>
    </location>
</feature>
<feature type="modified residue" description="Pyrrolidone carboxylic acid" evidence="1">
    <location>
        <position position="183"/>
    </location>
</feature>
<feature type="modified residue" description="Proline amide" evidence="1">
    <location>
        <position position="185"/>
    </location>
</feature>
<feature type="sequence conflict" description="In Ref. 2; AAH95193." evidence="4" ref="2">
    <original>E</original>
    <variation>D</variation>
    <location>
        <position position="58"/>
    </location>
</feature>
<feature type="sequence conflict" description="In Ref. 2; AAH95193." evidence="4" ref="2">
    <original>E</original>
    <variation>K</variation>
    <location>
        <position position="84"/>
    </location>
</feature>
<feature type="sequence conflict" description="In Ref. 2; AAH95193." evidence="4" ref="2">
    <original>P</original>
    <variation>R</variation>
    <location>
        <position position="98"/>
    </location>
</feature>
<accession>Q5EDF9</accession>
<accession>Q503T3</accession>
<proteinExistence type="evidence at transcript level"/>
<dbReference type="EMBL" id="AY903312">
    <property type="protein sequence ID" value="AAW82913.1"/>
    <property type="molecule type" value="mRNA"/>
</dbReference>
<dbReference type="EMBL" id="BC095193">
    <property type="protein sequence ID" value="AAH95193.1"/>
    <property type="molecule type" value="mRNA"/>
</dbReference>
<dbReference type="RefSeq" id="NP_001012365.2">
    <property type="nucleotide sequence ID" value="NM_001012365.2"/>
</dbReference>
<dbReference type="FunCoup" id="Q5EDF9">
    <property type="interactions" value="76"/>
</dbReference>
<dbReference type="STRING" id="7955.ENSDARP00000021167"/>
<dbReference type="PaxDb" id="7955-ENSDARP00000021167"/>
<dbReference type="GeneID" id="266721"/>
<dbReference type="KEGG" id="dre:266721"/>
<dbReference type="AGR" id="ZFIN:ZDB-GENE-020930-1"/>
<dbReference type="CTD" id="7200"/>
<dbReference type="ZFIN" id="ZDB-GENE-020930-1">
    <property type="gene designation" value="trh"/>
</dbReference>
<dbReference type="eggNOG" id="ENOG502RWH0">
    <property type="taxonomic scope" value="Eukaryota"/>
</dbReference>
<dbReference type="InParanoid" id="Q5EDF9"/>
<dbReference type="OrthoDB" id="9949225at2759"/>
<dbReference type="PhylomeDB" id="Q5EDF9"/>
<dbReference type="PRO" id="PR:Q5EDF9"/>
<dbReference type="Proteomes" id="UP000000437">
    <property type="component" value="Chromosome 8"/>
</dbReference>
<dbReference type="GO" id="GO:0005576">
    <property type="term" value="C:extracellular region"/>
    <property type="evidence" value="ECO:0007669"/>
    <property type="project" value="UniProtKB-SubCell"/>
</dbReference>
<dbReference type="GO" id="GO:0030141">
    <property type="term" value="C:secretory granule"/>
    <property type="evidence" value="ECO:0000318"/>
    <property type="project" value="GO_Central"/>
</dbReference>
<dbReference type="GO" id="GO:0008437">
    <property type="term" value="F:thyrotropin-releasing hormone activity"/>
    <property type="evidence" value="ECO:0000318"/>
    <property type="project" value="GO_Central"/>
</dbReference>
<dbReference type="GO" id="GO:0042755">
    <property type="term" value="P:eating behavior"/>
    <property type="evidence" value="ECO:0000318"/>
    <property type="project" value="GO_Central"/>
</dbReference>
<dbReference type="GO" id="GO:0001692">
    <property type="term" value="P:histamine metabolic process"/>
    <property type="evidence" value="ECO:0000318"/>
    <property type="project" value="GO_Central"/>
</dbReference>
<dbReference type="GO" id="GO:0009755">
    <property type="term" value="P:hormone-mediated signaling pathway"/>
    <property type="evidence" value="ECO:0007669"/>
    <property type="project" value="InterPro"/>
</dbReference>
<dbReference type="GO" id="GO:0014050">
    <property type="term" value="P:negative regulation of glutamate secretion"/>
    <property type="evidence" value="ECO:0000318"/>
    <property type="project" value="GO_Central"/>
</dbReference>
<dbReference type="GO" id="GO:0014054">
    <property type="term" value="P:positive regulation of gamma-aminobutyric acid secretion"/>
    <property type="evidence" value="ECO:0000318"/>
    <property type="project" value="GO_Central"/>
</dbReference>
<dbReference type="GO" id="GO:0032024">
    <property type="term" value="P:positive regulation of insulin secretion"/>
    <property type="evidence" value="ECO:0000318"/>
    <property type="project" value="GO_Central"/>
</dbReference>
<dbReference type="InterPro" id="IPR008857">
    <property type="entry name" value="TRH"/>
</dbReference>
<dbReference type="PANTHER" id="PTHR17530">
    <property type="entry name" value="PRO-THYROTROPIN-RELEASING HORMONE"/>
    <property type="match status" value="1"/>
</dbReference>
<dbReference type="PANTHER" id="PTHR17530:SF2">
    <property type="entry name" value="PRO-THYROTROPIN-RELEASING HORMONE"/>
    <property type="match status" value="1"/>
</dbReference>
<dbReference type="Pfam" id="PF05438">
    <property type="entry name" value="TRH"/>
    <property type="match status" value="2"/>
</dbReference>
<dbReference type="PIRSF" id="PIRSF001795">
    <property type="entry name" value="TRH"/>
    <property type="match status" value="1"/>
</dbReference>
<gene>
    <name type="primary">trh</name>
</gene>
<reference key="1">
    <citation type="submission" date="2005-01" db="EMBL/GenBank/DDBJ databases">
        <title>Molecular cloning and characterization of the thyrotropin-releasing hormone from zebrafish, Danio rerio.</title>
        <authorList>
            <person name="Zhang D."/>
            <person name="Jiang S."/>
        </authorList>
    </citation>
    <scope>NUCLEOTIDE SEQUENCE [MRNA]</scope>
</reference>
<reference key="2">
    <citation type="submission" date="2005-05" db="EMBL/GenBank/DDBJ databases">
        <authorList>
            <consortium name="NIH - Zebrafish Gene Collection (ZGC) project"/>
        </authorList>
    </citation>
    <scope>NUCLEOTIDE SEQUENCE [LARGE SCALE MRNA]</scope>
    <source>
        <tissue>Brain</tissue>
    </source>
</reference>
<protein>
    <recommendedName>
        <fullName>Pro-thyrotropin-releasing hormone</fullName>
        <shortName>Pro-TRH</shortName>
    </recommendedName>
    <alternativeName>
        <fullName>Prothyroliberin</fullName>
    </alternativeName>
    <component>
        <recommendedName>
            <fullName>Thyrotropin-releasing hormone</fullName>
            <shortName>TRH</shortName>
        </recommendedName>
        <alternativeName>
            <fullName>Protirelin</fullName>
        </alternativeName>
        <alternativeName>
            <fullName>TSH-releasing factor</fullName>
        </alternativeName>
        <alternativeName>
            <fullName>Thyroliberin</fullName>
        </alternativeName>
        <alternativeName>
            <fullName>Thyrotropin-releasing factor</fullName>
            <shortName>TRF</shortName>
        </alternativeName>
    </component>
</protein>
<evidence type="ECO:0000250" key="1"/>
<evidence type="ECO:0000255" key="2"/>
<evidence type="ECO:0000256" key="3">
    <source>
        <dbReference type="SAM" id="MobiDB-lite"/>
    </source>
</evidence>
<evidence type="ECO:0000305" key="4"/>
<keyword id="KW-0027">Amidation</keyword>
<keyword id="KW-0165">Cleavage on pair of basic residues</keyword>
<keyword id="KW-0372">Hormone</keyword>
<keyword id="KW-0873">Pyrrolidone carboxylic acid</keyword>
<keyword id="KW-1185">Reference proteome</keyword>
<keyword id="KW-0677">Repeat</keyword>
<keyword id="KW-0964">Secreted</keyword>
<keyword id="KW-0732">Signal</keyword>
<name>TRH_DANRE</name>
<comment type="function">
    <text evidence="1">Functions as a regulator of the biosynthesis of TSH in the anterior pituitary gland and as a neurotransmitter/ neuromodulator in the central and peripheral nervous systems.</text>
</comment>
<comment type="subcellular location">
    <subcellularLocation>
        <location>Secreted</location>
    </subcellularLocation>
</comment>
<comment type="similarity">
    <text evidence="4">Belongs to the TRH family.</text>
</comment>